<reference key="1">
    <citation type="journal article" date="2010" name="PLoS Genet.">
        <title>Genome sequence of the plant growth promoting endophytic bacterium Enterobacter sp. 638.</title>
        <authorList>
            <person name="Taghavi S."/>
            <person name="van der Lelie D."/>
            <person name="Hoffman A."/>
            <person name="Zhang Y.B."/>
            <person name="Walla M.D."/>
            <person name="Vangronsveld J."/>
            <person name="Newman L."/>
            <person name="Monchy S."/>
        </authorList>
    </citation>
    <scope>NUCLEOTIDE SEQUENCE [LARGE SCALE GENOMIC DNA]</scope>
    <source>
        <strain>638</strain>
    </source>
</reference>
<feature type="chain" id="PRO_1000065676" description="Bifunctional polymyxin resistance protein ArnA">
    <location>
        <begin position="1"/>
        <end position="660"/>
    </location>
</feature>
<feature type="region of interest" description="Formyltransferase ArnAFT">
    <location>
        <begin position="1"/>
        <end position="304"/>
    </location>
</feature>
<feature type="region of interest" description="Dehydrogenase ArnADH">
    <location>
        <begin position="314"/>
        <end position="660"/>
    </location>
</feature>
<feature type="active site" description="Proton donor; for formyltransferase activity" evidence="1">
    <location>
        <position position="104"/>
    </location>
</feature>
<feature type="active site" description="Proton acceptor; for decarboxylase activity" evidence="1">
    <location>
        <position position="434"/>
    </location>
</feature>
<feature type="active site" description="Proton donor; for decarboxylase activity" evidence="1">
    <location>
        <position position="619"/>
    </location>
</feature>
<feature type="binding site" evidence="1">
    <location>
        <position position="114"/>
    </location>
    <ligand>
        <name>(6R)-10-formyltetrahydrofolate</name>
        <dbReference type="ChEBI" id="CHEBI:195366"/>
    </ligand>
</feature>
<feature type="binding site" evidence="1">
    <location>
        <begin position="136"/>
        <end position="140"/>
    </location>
    <ligand>
        <name>(6R)-10-formyltetrahydrofolate</name>
        <dbReference type="ChEBI" id="CHEBI:195366"/>
    </ligand>
</feature>
<feature type="binding site" evidence="1">
    <location>
        <position position="347"/>
    </location>
    <ligand>
        <name>NAD(+)</name>
        <dbReference type="ChEBI" id="CHEBI:57540"/>
    </ligand>
</feature>
<feature type="binding site" evidence="1">
    <location>
        <begin position="368"/>
        <end position="369"/>
    </location>
    <ligand>
        <name>NAD(+)</name>
        <dbReference type="ChEBI" id="CHEBI:57540"/>
    </ligand>
</feature>
<feature type="binding site" evidence="1">
    <location>
        <position position="393"/>
    </location>
    <ligand>
        <name>UDP-alpha-D-glucuronate</name>
        <dbReference type="ChEBI" id="CHEBI:58052"/>
    </ligand>
</feature>
<feature type="binding site" evidence="1">
    <location>
        <position position="398"/>
    </location>
    <ligand>
        <name>UDP-alpha-D-glucuronate</name>
        <dbReference type="ChEBI" id="CHEBI:58052"/>
    </ligand>
</feature>
<feature type="binding site" evidence="1">
    <location>
        <begin position="432"/>
        <end position="433"/>
    </location>
    <ligand>
        <name>UDP-alpha-D-glucuronate</name>
        <dbReference type="ChEBI" id="CHEBI:58052"/>
    </ligand>
</feature>
<feature type="binding site" evidence="1">
    <location>
        <position position="460"/>
    </location>
    <ligand>
        <name>UDP-alpha-D-glucuronate</name>
        <dbReference type="ChEBI" id="CHEBI:58052"/>
    </ligand>
</feature>
<feature type="binding site" evidence="1">
    <location>
        <position position="492"/>
    </location>
    <ligand>
        <name>UDP-alpha-D-glucuronate</name>
        <dbReference type="ChEBI" id="CHEBI:58052"/>
    </ligand>
</feature>
<feature type="binding site" evidence="1">
    <location>
        <begin position="526"/>
        <end position="535"/>
    </location>
    <ligand>
        <name>UDP-alpha-D-glucuronate</name>
        <dbReference type="ChEBI" id="CHEBI:58052"/>
    </ligand>
</feature>
<feature type="binding site" evidence="1">
    <location>
        <position position="613"/>
    </location>
    <ligand>
        <name>UDP-alpha-D-glucuronate</name>
        <dbReference type="ChEBI" id="CHEBI:58052"/>
    </ligand>
</feature>
<feature type="site" description="Transition state stabilizer" evidence="1">
    <location>
        <position position="102"/>
    </location>
</feature>
<feature type="site" description="Raises pKa of active site His" evidence="1">
    <location>
        <position position="140"/>
    </location>
</feature>
<accession>A4WAM3</accession>
<organism>
    <name type="scientific">Enterobacter sp. (strain 638)</name>
    <dbReference type="NCBI Taxonomy" id="399742"/>
    <lineage>
        <taxon>Bacteria</taxon>
        <taxon>Pseudomonadati</taxon>
        <taxon>Pseudomonadota</taxon>
        <taxon>Gammaproteobacteria</taxon>
        <taxon>Enterobacterales</taxon>
        <taxon>Enterobacteriaceae</taxon>
        <taxon>Enterobacter</taxon>
    </lineage>
</organism>
<dbReference type="EC" id="2.1.2.13" evidence="1"/>
<dbReference type="EC" id="1.1.1.305" evidence="1"/>
<dbReference type="EMBL" id="CP000653">
    <property type="protein sequence ID" value="ABP60753.1"/>
    <property type="molecule type" value="Genomic_DNA"/>
</dbReference>
<dbReference type="RefSeq" id="WP_012017468.1">
    <property type="nucleotide sequence ID" value="NC_009436.1"/>
</dbReference>
<dbReference type="SMR" id="A4WAM3"/>
<dbReference type="STRING" id="399742.Ent638_2077"/>
<dbReference type="KEGG" id="ent:Ent638_2077"/>
<dbReference type="eggNOG" id="COG0223">
    <property type="taxonomic scope" value="Bacteria"/>
</dbReference>
<dbReference type="eggNOG" id="COG0451">
    <property type="taxonomic scope" value="Bacteria"/>
</dbReference>
<dbReference type="HOGENOM" id="CLU_007383_23_2_6"/>
<dbReference type="OrthoDB" id="9802815at2"/>
<dbReference type="UniPathway" id="UPA00030"/>
<dbReference type="UniPathway" id="UPA00032">
    <property type="reaction ID" value="UER00492"/>
</dbReference>
<dbReference type="UniPathway" id="UPA00032">
    <property type="reaction ID" value="UER00494"/>
</dbReference>
<dbReference type="Proteomes" id="UP000000230">
    <property type="component" value="Chromosome"/>
</dbReference>
<dbReference type="GO" id="GO:0016020">
    <property type="term" value="C:membrane"/>
    <property type="evidence" value="ECO:0007669"/>
    <property type="project" value="GOC"/>
</dbReference>
<dbReference type="GO" id="GO:0016831">
    <property type="term" value="F:carboxy-lyase activity"/>
    <property type="evidence" value="ECO:0007669"/>
    <property type="project" value="InterPro"/>
</dbReference>
<dbReference type="GO" id="GO:0099619">
    <property type="term" value="F:UDP-4-amino-4-deoxy-L-arabinose formyltransferase activity"/>
    <property type="evidence" value="ECO:0007669"/>
    <property type="project" value="UniProtKB-EC"/>
</dbReference>
<dbReference type="GO" id="GO:0099618">
    <property type="term" value="F:UDP-glucuronate dehydrogenase activity"/>
    <property type="evidence" value="ECO:0007669"/>
    <property type="project" value="UniProtKB-EC"/>
</dbReference>
<dbReference type="GO" id="GO:0009245">
    <property type="term" value="P:lipid A biosynthetic process"/>
    <property type="evidence" value="ECO:0007669"/>
    <property type="project" value="UniProtKB-KW"/>
</dbReference>
<dbReference type="GO" id="GO:0009103">
    <property type="term" value="P:lipopolysaccharide biosynthetic process"/>
    <property type="evidence" value="ECO:0007669"/>
    <property type="project" value="UniProtKB-UniRule"/>
</dbReference>
<dbReference type="GO" id="GO:0046677">
    <property type="term" value="P:response to antibiotic"/>
    <property type="evidence" value="ECO:0007669"/>
    <property type="project" value="UniProtKB-KW"/>
</dbReference>
<dbReference type="CDD" id="cd08702">
    <property type="entry name" value="Arna_FMT_C"/>
    <property type="match status" value="1"/>
</dbReference>
<dbReference type="CDD" id="cd05257">
    <property type="entry name" value="Arna_like_SDR_e"/>
    <property type="match status" value="1"/>
</dbReference>
<dbReference type="FunFam" id="3.40.50.720:FF:000197">
    <property type="entry name" value="Bifunctional polymyxin resistance protein ArnA"/>
    <property type="match status" value="1"/>
</dbReference>
<dbReference type="Gene3D" id="3.40.50.12230">
    <property type="match status" value="1"/>
</dbReference>
<dbReference type="Gene3D" id="3.40.50.720">
    <property type="entry name" value="NAD(P)-binding Rossmann-like Domain"/>
    <property type="match status" value="1"/>
</dbReference>
<dbReference type="HAMAP" id="MF_01166">
    <property type="entry name" value="ArnA"/>
    <property type="match status" value="1"/>
</dbReference>
<dbReference type="InterPro" id="IPR045869">
    <property type="entry name" value="Arna-like_SDR_e"/>
</dbReference>
<dbReference type="InterPro" id="IPR021168">
    <property type="entry name" value="Bifun_polymyxin_resist_ArnA"/>
</dbReference>
<dbReference type="InterPro" id="IPR001509">
    <property type="entry name" value="Epimerase_deHydtase"/>
</dbReference>
<dbReference type="InterPro" id="IPR005793">
    <property type="entry name" value="Formyl_trans_C"/>
</dbReference>
<dbReference type="InterPro" id="IPR002376">
    <property type="entry name" value="Formyl_transf_N"/>
</dbReference>
<dbReference type="InterPro" id="IPR036477">
    <property type="entry name" value="Formyl_transf_N_sf"/>
</dbReference>
<dbReference type="InterPro" id="IPR011034">
    <property type="entry name" value="Formyl_transferase-like_C_sf"/>
</dbReference>
<dbReference type="InterPro" id="IPR050177">
    <property type="entry name" value="Lipid_A_modif_metabolic_enz"/>
</dbReference>
<dbReference type="InterPro" id="IPR036291">
    <property type="entry name" value="NAD(P)-bd_dom_sf"/>
</dbReference>
<dbReference type="NCBIfam" id="NF005414">
    <property type="entry name" value="PRK06988.1"/>
    <property type="match status" value="1"/>
</dbReference>
<dbReference type="NCBIfam" id="NF005998">
    <property type="entry name" value="PRK08125.1"/>
    <property type="match status" value="1"/>
</dbReference>
<dbReference type="NCBIfam" id="NF008872">
    <property type="entry name" value="PRK11908.1"/>
    <property type="match status" value="1"/>
</dbReference>
<dbReference type="PANTHER" id="PTHR43245">
    <property type="entry name" value="BIFUNCTIONAL POLYMYXIN RESISTANCE PROTEIN ARNA"/>
    <property type="match status" value="1"/>
</dbReference>
<dbReference type="PANTHER" id="PTHR43245:SF13">
    <property type="entry name" value="UDP-D-APIOSE_UDP-D-XYLOSE SYNTHASE 2"/>
    <property type="match status" value="1"/>
</dbReference>
<dbReference type="Pfam" id="PF01370">
    <property type="entry name" value="Epimerase"/>
    <property type="match status" value="1"/>
</dbReference>
<dbReference type="Pfam" id="PF02911">
    <property type="entry name" value="Formyl_trans_C"/>
    <property type="match status" value="1"/>
</dbReference>
<dbReference type="Pfam" id="PF00551">
    <property type="entry name" value="Formyl_trans_N"/>
    <property type="match status" value="1"/>
</dbReference>
<dbReference type="PIRSF" id="PIRSF036506">
    <property type="entry name" value="Bifun_polymyxin_resist_ArnA"/>
    <property type="match status" value="1"/>
</dbReference>
<dbReference type="SUPFAM" id="SSF50486">
    <property type="entry name" value="FMT C-terminal domain-like"/>
    <property type="match status" value="1"/>
</dbReference>
<dbReference type="SUPFAM" id="SSF53328">
    <property type="entry name" value="Formyltransferase"/>
    <property type="match status" value="1"/>
</dbReference>
<dbReference type="SUPFAM" id="SSF51735">
    <property type="entry name" value="NAD(P)-binding Rossmann-fold domains"/>
    <property type="match status" value="1"/>
</dbReference>
<sequence>MKAVVFAYHDIGCAGINALVAAGYDITAIYTHPDAPSENHFFGSVARTAAEHGIPVYAPNDVNHPLWIDRIKSAQPDVIFSFYYRNLLCDEILNSATVGAFNLHGSLLPHYRGRAPLNWVLVKGETETGVTLHKMVSRADAGAIVAQHRVAIAPEETALTLHHKLTQASSDLLKDILPVIKTGHFPEVEQDHSQASIFGRRTAQDGCIDWHATAQEISNLVRAVTDPWPGAFGYVGGSKFIVWKARALEGLQAAKAGTVLSVSPLVIATGGGALEIMTGQTENGVYMQGSQLAQTLGLVAGAIISSQPVSAIKRRTRVLILGVNGFIGNHLTERLLQDDNFEVYGLDIGSDAISRFIGNSRFHFVEGDISIHSEWIEYHIKKCDVVLPLVAIATPIEYTRNPLRVFELDFEENLKIIRDCVKYQKRIIFPSTSEVYGMCSDKVFDEDHSNLIVGPINKQRWIYSVSKQLLDRVIWAYGEKEGLRFTLFRPFNWMGPRLDNLNAARIGSSRAITQLILNLVEGSPIKLIDGGRQKRCFTDISDGIEALFRIIENKNSNCDGQIINIGNPDNEASIKELAEMLLASFEKHPLRNHFPPFAGFREVESSTYYGKGYQDVEHRKPSIRNAHRLISWTPTVEMEKTIDETLDFFLKTVELTEPQA</sequence>
<name>ARNA_ENT38</name>
<keyword id="KW-0046">Antibiotic resistance</keyword>
<keyword id="KW-0441">Lipid A biosynthesis</keyword>
<keyword id="KW-0444">Lipid biosynthesis</keyword>
<keyword id="KW-0443">Lipid metabolism</keyword>
<keyword id="KW-0448">Lipopolysaccharide biosynthesis</keyword>
<keyword id="KW-0511">Multifunctional enzyme</keyword>
<keyword id="KW-0520">NAD</keyword>
<keyword id="KW-0560">Oxidoreductase</keyword>
<keyword id="KW-0808">Transferase</keyword>
<gene>
    <name evidence="1" type="primary">arnA</name>
    <name type="ordered locus">Ent638_2077</name>
</gene>
<protein>
    <recommendedName>
        <fullName evidence="1">Bifunctional polymyxin resistance protein ArnA</fullName>
    </recommendedName>
    <domain>
        <recommendedName>
            <fullName evidence="1">UDP-4-amino-4-deoxy-L-arabinose formyltransferase</fullName>
            <ecNumber evidence="1">2.1.2.13</ecNumber>
        </recommendedName>
        <alternativeName>
            <fullName evidence="1">ArnAFT</fullName>
        </alternativeName>
        <alternativeName>
            <fullName evidence="1">UDP-L-Ara4N formyltransferase</fullName>
        </alternativeName>
    </domain>
    <domain>
        <recommendedName>
            <fullName evidence="1">UDP-glucuronic acid oxidase, UDP-4-keto-hexauronic acid decarboxylating</fullName>
            <ecNumber evidence="1">1.1.1.305</ecNumber>
        </recommendedName>
        <alternativeName>
            <fullName evidence="1">ArnADH</fullName>
        </alternativeName>
        <alternativeName>
            <fullName evidence="1">UDP-GlcUA decarboxylase</fullName>
        </alternativeName>
        <alternativeName>
            <fullName evidence="1">UDP-glucuronic acid dehydrogenase</fullName>
        </alternativeName>
    </domain>
</protein>
<comment type="function">
    <text evidence="1">Bifunctional enzyme that catalyzes the oxidative decarboxylation of UDP-glucuronic acid (UDP-GlcUA) to UDP-4-keto-arabinose (UDP-Ara4O) and the addition of a formyl group to UDP-4-amino-4-deoxy-L-arabinose (UDP-L-Ara4N) to form UDP-L-4-formamido-arabinose (UDP-L-Ara4FN). The modified arabinose is attached to lipid A and is required for resistance to polymyxin and cationic antimicrobial peptides.</text>
</comment>
<comment type="catalytic activity">
    <reaction evidence="1">
        <text>UDP-alpha-D-glucuronate + NAD(+) = UDP-beta-L-threo-pentopyranos-4-ulose + CO2 + NADH</text>
        <dbReference type="Rhea" id="RHEA:24702"/>
        <dbReference type="ChEBI" id="CHEBI:16526"/>
        <dbReference type="ChEBI" id="CHEBI:57540"/>
        <dbReference type="ChEBI" id="CHEBI:57945"/>
        <dbReference type="ChEBI" id="CHEBI:58052"/>
        <dbReference type="ChEBI" id="CHEBI:58710"/>
        <dbReference type="EC" id="1.1.1.305"/>
    </reaction>
</comment>
<comment type="catalytic activity">
    <reaction evidence="1">
        <text>UDP-4-amino-4-deoxy-beta-L-arabinose + (6R)-10-formyltetrahydrofolate = UDP-4-deoxy-4-formamido-beta-L-arabinose + (6S)-5,6,7,8-tetrahydrofolate + H(+)</text>
        <dbReference type="Rhea" id="RHEA:24706"/>
        <dbReference type="ChEBI" id="CHEBI:15378"/>
        <dbReference type="ChEBI" id="CHEBI:57453"/>
        <dbReference type="ChEBI" id="CHEBI:58708"/>
        <dbReference type="ChEBI" id="CHEBI:58709"/>
        <dbReference type="ChEBI" id="CHEBI:195366"/>
        <dbReference type="EC" id="2.1.2.13"/>
    </reaction>
</comment>
<comment type="pathway">
    <text evidence="1">Nucleotide-sugar biosynthesis; UDP-4-deoxy-4-formamido-beta-L-arabinose biosynthesis; UDP-4-deoxy-4-formamido-beta-L-arabinose from UDP-alpha-D-glucuronate: step 1/3.</text>
</comment>
<comment type="pathway">
    <text evidence="1">Nucleotide-sugar biosynthesis; UDP-4-deoxy-4-formamido-beta-L-arabinose biosynthesis; UDP-4-deoxy-4-formamido-beta-L-arabinose from UDP-alpha-D-glucuronate: step 3/3.</text>
</comment>
<comment type="pathway">
    <text evidence="1">Bacterial outer membrane biogenesis; lipopolysaccharide biosynthesis.</text>
</comment>
<comment type="subunit">
    <text evidence="1">Homohexamer, formed by a dimer of trimers.</text>
</comment>
<comment type="similarity">
    <text evidence="1">In the N-terminal section; belongs to the Fmt family. UDP-L-Ara4N formyltransferase subfamily.</text>
</comment>
<comment type="similarity">
    <text evidence="1">In the C-terminal section; belongs to the NAD(P)-dependent epimerase/dehydratase family. UDP-glucuronic acid decarboxylase subfamily.</text>
</comment>
<evidence type="ECO:0000255" key="1">
    <source>
        <dbReference type="HAMAP-Rule" id="MF_01166"/>
    </source>
</evidence>
<proteinExistence type="inferred from homology"/>